<comment type="subunit">
    <text evidence="1">Part of the 50S ribosomal subunit.</text>
</comment>
<comment type="subcellular location">
    <subcellularLocation>
        <location>Plastid</location>
        <location>Chloroplast</location>
    </subcellularLocation>
</comment>
<comment type="similarity">
    <text evidence="1">Belongs to the universal ribosomal protein uL16 family.</text>
</comment>
<organism>
    <name type="scientific">Piper cenocladum</name>
    <name type="common">Ant piper</name>
    <dbReference type="NCBI Taxonomy" id="398741"/>
    <lineage>
        <taxon>Eukaryota</taxon>
        <taxon>Viridiplantae</taxon>
        <taxon>Streptophyta</taxon>
        <taxon>Embryophyta</taxon>
        <taxon>Tracheophyta</taxon>
        <taxon>Spermatophyta</taxon>
        <taxon>Magnoliopsida</taxon>
        <taxon>Magnoliidae</taxon>
        <taxon>Piperales</taxon>
        <taxon>Piperaceae</taxon>
        <taxon>Piper</taxon>
    </lineage>
</organism>
<protein>
    <recommendedName>
        <fullName evidence="1">Large ribosomal subunit protein uL16c</fullName>
    </recommendedName>
    <alternativeName>
        <fullName evidence="2">50S ribosomal protein L16, chloroplastic</fullName>
    </alternativeName>
</protein>
<geneLocation type="chloroplast"/>
<name>RK16_PIPCE</name>
<accession>Q06GM2</accession>
<feature type="chain" id="PRO_0000276388" description="Large ribosomal subunit protein uL16c">
    <location>
        <begin position="1"/>
        <end position="135"/>
    </location>
</feature>
<gene>
    <name evidence="1" type="primary">rpl16</name>
</gene>
<keyword id="KW-0150">Chloroplast</keyword>
<keyword id="KW-0934">Plastid</keyword>
<keyword id="KW-0687">Ribonucleoprotein</keyword>
<keyword id="KW-0689">Ribosomal protein</keyword>
<reference key="1">
    <citation type="journal article" date="2006" name="BMC Evol. Biol.">
        <title>Complete plastid genome sequences of Drimys, Liriodendron, and Piper: implications for the phylogenetic relationships of magnoliids.</title>
        <authorList>
            <person name="Cai Z."/>
            <person name="Penaflor C."/>
            <person name="Kuehl J.V."/>
            <person name="Leebens-Mack J."/>
            <person name="Carlson J.E."/>
            <person name="dePamphilis C.W."/>
            <person name="Boore J.L."/>
            <person name="Jansen R.K."/>
        </authorList>
    </citation>
    <scope>NUCLEOTIDE SEQUENCE [LARGE SCALE GENOMIC DNA]</scope>
</reference>
<proteinExistence type="inferred from homology"/>
<sequence>MLSPKRTRFRKQHRGRMKGISYRGNRICFGRYALQALEPAWITSRQIEAGRRAMARYARRGGKIWVRIFPDKPVTVRPAETRMGSGKGSPEYWVSVVKPGRILYEIGGISETVARAAISIAASKMPIRTQFVIAG</sequence>
<evidence type="ECO:0000255" key="1">
    <source>
        <dbReference type="HAMAP-Rule" id="MF_01342"/>
    </source>
</evidence>
<evidence type="ECO:0000305" key="2"/>
<dbReference type="EMBL" id="DQ887677">
    <property type="protein sequence ID" value="ABI14509.1"/>
    <property type="molecule type" value="Genomic_DNA"/>
</dbReference>
<dbReference type="RefSeq" id="YP_784511.1">
    <property type="nucleotide sequence ID" value="NC_008457.1"/>
</dbReference>
<dbReference type="SMR" id="Q06GM2"/>
<dbReference type="GeneID" id="4363656"/>
<dbReference type="GO" id="GO:0009507">
    <property type="term" value="C:chloroplast"/>
    <property type="evidence" value="ECO:0007669"/>
    <property type="project" value="UniProtKB-SubCell"/>
</dbReference>
<dbReference type="GO" id="GO:0005762">
    <property type="term" value="C:mitochondrial large ribosomal subunit"/>
    <property type="evidence" value="ECO:0007669"/>
    <property type="project" value="TreeGrafter"/>
</dbReference>
<dbReference type="GO" id="GO:0019843">
    <property type="term" value="F:rRNA binding"/>
    <property type="evidence" value="ECO:0007669"/>
    <property type="project" value="InterPro"/>
</dbReference>
<dbReference type="GO" id="GO:0003735">
    <property type="term" value="F:structural constituent of ribosome"/>
    <property type="evidence" value="ECO:0007669"/>
    <property type="project" value="InterPro"/>
</dbReference>
<dbReference type="GO" id="GO:0032543">
    <property type="term" value="P:mitochondrial translation"/>
    <property type="evidence" value="ECO:0007669"/>
    <property type="project" value="TreeGrafter"/>
</dbReference>
<dbReference type="CDD" id="cd01433">
    <property type="entry name" value="Ribosomal_L16_L10e"/>
    <property type="match status" value="1"/>
</dbReference>
<dbReference type="FunFam" id="3.90.1170.10:FF:000001">
    <property type="entry name" value="50S ribosomal protein L16"/>
    <property type="match status" value="1"/>
</dbReference>
<dbReference type="Gene3D" id="3.90.1170.10">
    <property type="entry name" value="Ribosomal protein L10e/L16"/>
    <property type="match status" value="1"/>
</dbReference>
<dbReference type="HAMAP" id="MF_01342">
    <property type="entry name" value="Ribosomal_uL16"/>
    <property type="match status" value="1"/>
</dbReference>
<dbReference type="InterPro" id="IPR047873">
    <property type="entry name" value="Ribosomal_uL16"/>
</dbReference>
<dbReference type="InterPro" id="IPR000114">
    <property type="entry name" value="Ribosomal_uL16_bact-type"/>
</dbReference>
<dbReference type="InterPro" id="IPR020798">
    <property type="entry name" value="Ribosomal_uL16_CS"/>
</dbReference>
<dbReference type="InterPro" id="IPR016180">
    <property type="entry name" value="Ribosomal_uL16_dom"/>
</dbReference>
<dbReference type="InterPro" id="IPR036920">
    <property type="entry name" value="Ribosomal_uL16_sf"/>
</dbReference>
<dbReference type="NCBIfam" id="TIGR01164">
    <property type="entry name" value="rplP_bact"/>
    <property type="match status" value="1"/>
</dbReference>
<dbReference type="PANTHER" id="PTHR12220">
    <property type="entry name" value="50S/60S RIBOSOMAL PROTEIN L16"/>
    <property type="match status" value="1"/>
</dbReference>
<dbReference type="PANTHER" id="PTHR12220:SF13">
    <property type="entry name" value="LARGE RIBOSOMAL SUBUNIT PROTEIN UL16M"/>
    <property type="match status" value="1"/>
</dbReference>
<dbReference type="Pfam" id="PF00252">
    <property type="entry name" value="Ribosomal_L16"/>
    <property type="match status" value="1"/>
</dbReference>
<dbReference type="PRINTS" id="PR00060">
    <property type="entry name" value="RIBOSOMALL16"/>
</dbReference>
<dbReference type="SUPFAM" id="SSF54686">
    <property type="entry name" value="Ribosomal protein L16p/L10e"/>
    <property type="match status" value="1"/>
</dbReference>
<dbReference type="PROSITE" id="PS00586">
    <property type="entry name" value="RIBOSOMAL_L16_1"/>
    <property type="match status" value="1"/>
</dbReference>
<dbReference type="PROSITE" id="PS00701">
    <property type="entry name" value="RIBOSOMAL_L16_2"/>
    <property type="match status" value="1"/>
</dbReference>